<gene>
    <name evidence="1" type="primary">nadK</name>
    <name type="ordered locus">azo2580</name>
</gene>
<proteinExistence type="inferred from homology"/>
<dbReference type="EC" id="2.7.1.23" evidence="1"/>
<dbReference type="EMBL" id="AM406670">
    <property type="protein sequence ID" value="CAL95197.1"/>
    <property type="molecule type" value="Genomic_DNA"/>
</dbReference>
<dbReference type="RefSeq" id="WP_011766307.1">
    <property type="nucleotide sequence ID" value="NC_008702.1"/>
</dbReference>
<dbReference type="SMR" id="A1K8P2"/>
<dbReference type="STRING" id="62928.azo2580"/>
<dbReference type="KEGG" id="azo:azo2580"/>
<dbReference type="eggNOG" id="COG0061">
    <property type="taxonomic scope" value="Bacteria"/>
</dbReference>
<dbReference type="HOGENOM" id="CLU_008831_0_1_4"/>
<dbReference type="Proteomes" id="UP000002588">
    <property type="component" value="Chromosome"/>
</dbReference>
<dbReference type="GO" id="GO:0005737">
    <property type="term" value="C:cytoplasm"/>
    <property type="evidence" value="ECO:0007669"/>
    <property type="project" value="UniProtKB-SubCell"/>
</dbReference>
<dbReference type="GO" id="GO:0005524">
    <property type="term" value="F:ATP binding"/>
    <property type="evidence" value="ECO:0007669"/>
    <property type="project" value="UniProtKB-KW"/>
</dbReference>
<dbReference type="GO" id="GO:0046872">
    <property type="term" value="F:metal ion binding"/>
    <property type="evidence" value="ECO:0007669"/>
    <property type="project" value="UniProtKB-UniRule"/>
</dbReference>
<dbReference type="GO" id="GO:0051287">
    <property type="term" value="F:NAD binding"/>
    <property type="evidence" value="ECO:0007669"/>
    <property type="project" value="UniProtKB-ARBA"/>
</dbReference>
<dbReference type="GO" id="GO:0003951">
    <property type="term" value="F:NAD+ kinase activity"/>
    <property type="evidence" value="ECO:0007669"/>
    <property type="project" value="UniProtKB-UniRule"/>
</dbReference>
<dbReference type="GO" id="GO:0019674">
    <property type="term" value="P:NAD metabolic process"/>
    <property type="evidence" value="ECO:0007669"/>
    <property type="project" value="InterPro"/>
</dbReference>
<dbReference type="GO" id="GO:0006741">
    <property type="term" value="P:NADP biosynthetic process"/>
    <property type="evidence" value="ECO:0007669"/>
    <property type="project" value="UniProtKB-UniRule"/>
</dbReference>
<dbReference type="Gene3D" id="3.40.50.10330">
    <property type="entry name" value="Probable inorganic polyphosphate/atp-NAD kinase, domain 1"/>
    <property type="match status" value="1"/>
</dbReference>
<dbReference type="Gene3D" id="2.60.200.30">
    <property type="entry name" value="Probable inorganic polyphosphate/atp-NAD kinase, domain 2"/>
    <property type="match status" value="1"/>
</dbReference>
<dbReference type="HAMAP" id="MF_00361">
    <property type="entry name" value="NAD_kinase"/>
    <property type="match status" value="1"/>
</dbReference>
<dbReference type="InterPro" id="IPR017438">
    <property type="entry name" value="ATP-NAD_kinase_N"/>
</dbReference>
<dbReference type="InterPro" id="IPR017437">
    <property type="entry name" value="ATP-NAD_kinase_PpnK-typ_C"/>
</dbReference>
<dbReference type="InterPro" id="IPR016064">
    <property type="entry name" value="NAD/diacylglycerol_kinase_sf"/>
</dbReference>
<dbReference type="InterPro" id="IPR002504">
    <property type="entry name" value="NADK"/>
</dbReference>
<dbReference type="NCBIfam" id="NF002306">
    <property type="entry name" value="PRK01231.1"/>
    <property type="match status" value="1"/>
</dbReference>
<dbReference type="NCBIfam" id="NF002561">
    <property type="entry name" value="PRK02155.1"/>
    <property type="match status" value="1"/>
</dbReference>
<dbReference type="PANTHER" id="PTHR20275">
    <property type="entry name" value="NAD KINASE"/>
    <property type="match status" value="1"/>
</dbReference>
<dbReference type="PANTHER" id="PTHR20275:SF0">
    <property type="entry name" value="NAD KINASE"/>
    <property type="match status" value="1"/>
</dbReference>
<dbReference type="Pfam" id="PF01513">
    <property type="entry name" value="NAD_kinase"/>
    <property type="match status" value="1"/>
</dbReference>
<dbReference type="Pfam" id="PF20143">
    <property type="entry name" value="NAD_kinase_C"/>
    <property type="match status" value="1"/>
</dbReference>
<dbReference type="SUPFAM" id="SSF111331">
    <property type="entry name" value="NAD kinase/diacylglycerol kinase-like"/>
    <property type="match status" value="1"/>
</dbReference>
<name>NADK_AZOSB</name>
<accession>A1K8P2</accession>
<feature type="chain" id="PRO_1000059864" description="NAD kinase">
    <location>
        <begin position="1"/>
        <end position="294"/>
    </location>
</feature>
<feature type="active site" description="Proton acceptor" evidence="1">
    <location>
        <position position="74"/>
    </location>
</feature>
<feature type="binding site" evidence="1">
    <location>
        <begin position="74"/>
        <end position="75"/>
    </location>
    <ligand>
        <name>NAD(+)</name>
        <dbReference type="ChEBI" id="CHEBI:57540"/>
    </ligand>
</feature>
<feature type="binding site" evidence="1">
    <location>
        <begin position="148"/>
        <end position="149"/>
    </location>
    <ligand>
        <name>NAD(+)</name>
        <dbReference type="ChEBI" id="CHEBI:57540"/>
    </ligand>
</feature>
<feature type="binding site" evidence="1">
    <location>
        <position position="159"/>
    </location>
    <ligand>
        <name>NAD(+)</name>
        <dbReference type="ChEBI" id="CHEBI:57540"/>
    </ligand>
</feature>
<feature type="binding site" evidence="1">
    <location>
        <position position="176"/>
    </location>
    <ligand>
        <name>NAD(+)</name>
        <dbReference type="ChEBI" id="CHEBI:57540"/>
    </ligand>
</feature>
<feature type="binding site" evidence="1">
    <location>
        <position position="178"/>
    </location>
    <ligand>
        <name>NAD(+)</name>
        <dbReference type="ChEBI" id="CHEBI:57540"/>
    </ligand>
</feature>
<feature type="binding site" evidence="1">
    <location>
        <begin position="189"/>
        <end position="194"/>
    </location>
    <ligand>
        <name>NAD(+)</name>
        <dbReference type="ChEBI" id="CHEBI:57540"/>
    </ligand>
</feature>
<feature type="binding site" evidence="1">
    <location>
        <position position="247"/>
    </location>
    <ligand>
        <name>NAD(+)</name>
        <dbReference type="ChEBI" id="CHEBI:57540"/>
    </ligand>
</feature>
<reference key="1">
    <citation type="journal article" date="2006" name="Nat. Biotechnol.">
        <title>Complete genome of the mutualistic, N2-fixing grass endophyte Azoarcus sp. strain BH72.</title>
        <authorList>
            <person name="Krause A."/>
            <person name="Ramakumar A."/>
            <person name="Bartels D."/>
            <person name="Battistoni F."/>
            <person name="Bekel T."/>
            <person name="Boch J."/>
            <person name="Boehm M."/>
            <person name="Friedrich F."/>
            <person name="Hurek T."/>
            <person name="Krause L."/>
            <person name="Linke B."/>
            <person name="McHardy A.C."/>
            <person name="Sarkar A."/>
            <person name="Schneiker S."/>
            <person name="Syed A.A."/>
            <person name="Thauer R."/>
            <person name="Vorhoelter F.-J."/>
            <person name="Weidner S."/>
            <person name="Puehler A."/>
            <person name="Reinhold-Hurek B."/>
            <person name="Kaiser O."/>
            <person name="Goesmann A."/>
        </authorList>
    </citation>
    <scope>NUCLEOTIDE SEQUENCE [LARGE SCALE GENOMIC DNA]</scope>
    <source>
        <strain>BH72</strain>
    </source>
</reference>
<comment type="function">
    <text evidence="1">Involved in the regulation of the intracellular balance of NAD and NADP, and is a key enzyme in the biosynthesis of NADP. Catalyzes specifically the phosphorylation on 2'-hydroxyl of the adenosine moiety of NAD to yield NADP.</text>
</comment>
<comment type="catalytic activity">
    <reaction evidence="1">
        <text>NAD(+) + ATP = ADP + NADP(+) + H(+)</text>
        <dbReference type="Rhea" id="RHEA:18629"/>
        <dbReference type="ChEBI" id="CHEBI:15378"/>
        <dbReference type="ChEBI" id="CHEBI:30616"/>
        <dbReference type="ChEBI" id="CHEBI:57540"/>
        <dbReference type="ChEBI" id="CHEBI:58349"/>
        <dbReference type="ChEBI" id="CHEBI:456216"/>
        <dbReference type="EC" id="2.7.1.23"/>
    </reaction>
</comment>
<comment type="cofactor">
    <cofactor evidence="1">
        <name>a divalent metal cation</name>
        <dbReference type="ChEBI" id="CHEBI:60240"/>
    </cofactor>
</comment>
<comment type="subcellular location">
    <subcellularLocation>
        <location evidence="1">Cytoplasm</location>
    </subcellularLocation>
</comment>
<comment type="similarity">
    <text evidence="1">Belongs to the NAD kinase family.</text>
</comment>
<keyword id="KW-0067">ATP-binding</keyword>
<keyword id="KW-0963">Cytoplasm</keyword>
<keyword id="KW-0418">Kinase</keyword>
<keyword id="KW-0520">NAD</keyword>
<keyword id="KW-0521">NADP</keyword>
<keyword id="KW-0547">Nucleotide-binding</keyword>
<keyword id="KW-1185">Reference proteome</keyword>
<keyword id="KW-0808">Transferase</keyword>
<sequence length="294" mass="31956">MSAHFRSVALIGKYQSADVAESVFAIANHLRQRGLVVWIEQGTASSIGGAADFTVASYEEIGSRAELAVVIGGDGTMLNAARRLAEHQVPLVGVNLGRLGFLTDVARSDALQRLEEIVDGRYSEESRFMLDAEVLRSGERVFQTLALNDVVVNKGDLGRMIEFDLSIDGEFVYTQRSDGMIISTPTGSTAYALSANGPILHPGVGGIALVPLCPHALTARPVTLPDTCRIEIRLLPPHDASIHFDGQARFDARAGDCVRLGRSPLAVRLLHPEGYNYYAMLREKLHWSAVPRHN</sequence>
<evidence type="ECO:0000255" key="1">
    <source>
        <dbReference type="HAMAP-Rule" id="MF_00361"/>
    </source>
</evidence>
<protein>
    <recommendedName>
        <fullName evidence="1">NAD kinase</fullName>
        <ecNumber evidence="1">2.7.1.23</ecNumber>
    </recommendedName>
    <alternativeName>
        <fullName evidence="1">ATP-dependent NAD kinase</fullName>
    </alternativeName>
</protein>
<organism>
    <name type="scientific">Azoarcus sp. (strain BH72)</name>
    <dbReference type="NCBI Taxonomy" id="418699"/>
    <lineage>
        <taxon>Bacteria</taxon>
        <taxon>Pseudomonadati</taxon>
        <taxon>Pseudomonadota</taxon>
        <taxon>Betaproteobacteria</taxon>
        <taxon>Rhodocyclales</taxon>
        <taxon>Zoogloeaceae</taxon>
        <taxon>Azoarcus</taxon>
    </lineage>
</organism>